<proteinExistence type="inferred from homology"/>
<keyword id="KW-0240">DNA-directed RNA polymerase</keyword>
<keyword id="KW-0548">Nucleotidyltransferase</keyword>
<keyword id="KW-0804">Transcription</keyword>
<keyword id="KW-0808">Transferase</keyword>
<comment type="function">
    <text evidence="1">DNA-dependent RNA polymerase catalyzes the transcription of DNA into RNA using the four ribonucleoside triphosphates as substrates.</text>
</comment>
<comment type="catalytic activity">
    <reaction evidence="1">
        <text>RNA(n) + a ribonucleoside 5'-triphosphate = RNA(n+1) + diphosphate</text>
        <dbReference type="Rhea" id="RHEA:21248"/>
        <dbReference type="Rhea" id="RHEA-COMP:14527"/>
        <dbReference type="Rhea" id="RHEA-COMP:17342"/>
        <dbReference type="ChEBI" id="CHEBI:33019"/>
        <dbReference type="ChEBI" id="CHEBI:61557"/>
        <dbReference type="ChEBI" id="CHEBI:140395"/>
        <dbReference type="EC" id="2.7.7.6"/>
    </reaction>
</comment>
<comment type="subunit">
    <text evidence="1">The RNAP catalytic core consists of 2 alpha, 1 beta, 1 beta' and 1 omega subunit. When a sigma factor is associated with the core the holoenzyme is formed, which can initiate transcription.</text>
</comment>
<comment type="similarity">
    <text evidence="1">Belongs to the RNA polymerase beta chain family.</text>
</comment>
<accession>B0U5X7</accession>
<organism>
    <name type="scientific">Xylella fastidiosa (strain M12)</name>
    <dbReference type="NCBI Taxonomy" id="405440"/>
    <lineage>
        <taxon>Bacteria</taxon>
        <taxon>Pseudomonadati</taxon>
        <taxon>Pseudomonadota</taxon>
        <taxon>Gammaproteobacteria</taxon>
        <taxon>Lysobacterales</taxon>
        <taxon>Lysobacteraceae</taxon>
        <taxon>Xylella</taxon>
    </lineage>
</organism>
<protein>
    <recommendedName>
        <fullName evidence="1">DNA-directed RNA polymerase subunit beta</fullName>
        <shortName evidence="1">RNAP subunit beta</shortName>
        <ecNumber evidence="1">2.7.7.6</ecNumber>
    </recommendedName>
    <alternativeName>
        <fullName evidence="1">RNA polymerase subunit beta</fullName>
    </alternativeName>
    <alternativeName>
        <fullName evidence="1">Transcriptase subunit beta</fullName>
    </alternativeName>
</protein>
<sequence>MTSYSFTEKKRIRKDFGKHRSILKVPFLLAIQVDSYRAFLQGDVESSQRKDIGLHGALKSVFPIVSYSGNAALEYVGYKLGEPMFDERECRQRGMSYGAPLRVTVRLVIYDRESSTKAVKYIKEQEVYLGEIPLMTENGTFIVNGTERVIVSQLHRSPGVFFDHDRGKTHSSGKLLYSARIIPCRGSWLDFEFDPKDALFTRIDRRRKLPVSILLRALGYSNEEILGEFFEINTFHINPDKGVQLELVPERLRGEILSFNLTDGGGVIVEAGKRITARHVKQLEASGISALAVPDDYLIGRILSHDVIDATTGELLASANSEVNEDRIVAFRKAGIESVGTLWVNDLDRGAYLSNTLRIDPTRTQLEAQVEIYRMMRPGEPPTKEAAQNLFHNLFFTFDRYDLSMVGRMKFNRRVGRKEVAGEPVLYDKKYFSDRNDEESRRLVSKLGETSDILDVIKGLCEIRNGRGVVDDIDHLGNRRVRSVGEMAENVFRVGLVRVERAVKERLSMAESEGLTPQELINAKPVAAAIKEFFGSSQLSQFMDQNNPLSEVTHKRRLSALGPGGLTRERAGFEVRDVHLSHYGCLCTIETPEGPNIGLINSLAVFARTNQYGFLETPYRKVVEGRVTDEVEYLSAIEENQYVIAQANTLTDDNGQLTESFVPCRFQGESLLKPPSYVHYMDVSPMQTVSVAAALVPFLEHDDANRALMGANMQRQAVPTLRAQKPLVGTGIERTVALDSGVTVNARRGGVIDQVDAGRIVVKVNESEIIGATDAGVDIYGLIKYTRSNQNTCINQRPLVNVGDIIASGDVLADGPSTDIGELALGQNMLIAFMPWNGYNFEDSILLSERVVEEDRYTTIHIEELTCIARDTKLGSEEISADIPNVSEQALNRLDESGVVYIGAEVRAGDILVGKVTPKGESQLTPEEKLLRAIFGEKASDVKDSSLRVPPGMDGTVIDVQVFTRDGIEKDKRAHQIEEYEIKRVKKDFDDQFRILEGAIYARLRSQIVGKVVNSGVDIKKGEVITGPYLDGLKKSDWFALRMKDEVAVEAIDRAQKQIQAYQKEFDQRFSDKRSKITQGDDLAPGVLKMVKVFLAVKRCIQCGDKMAGRHGNKGVISNIVPVEDMPFMEDGTPVDIVLNPLGVPSRMNIGQILEVHLGWAAKGLGHRIQRMLEANAAIADLRKFLNEIYNHDKSLVGERVDLSQFSDDELLNMAKNLTDGVPMASPVFDGASEQEIKRMLDLAELPTGGQTQLYDGHTGEPFDRKTTVGYMHYLKLNHLVDDKMHARSTGPYSLVTQQPLGGKAQFGGQRFGEMEVWALEAYGAAYTLQEMLTVKSDDVQGRNQMYKNIVDGDHQMVAGMPESFNVLVKEIRSLAINIELEDN</sequence>
<name>RPOB_XYLFM</name>
<dbReference type="EC" id="2.7.7.6" evidence="1"/>
<dbReference type="EMBL" id="CP000941">
    <property type="protein sequence ID" value="ACA13049.1"/>
    <property type="molecule type" value="Genomic_DNA"/>
</dbReference>
<dbReference type="RefSeq" id="WP_004084689.1">
    <property type="nucleotide sequence ID" value="NC_010513.1"/>
</dbReference>
<dbReference type="SMR" id="B0U5X7"/>
<dbReference type="KEGG" id="xfm:Xfasm12_2196"/>
<dbReference type="HOGENOM" id="CLU_000524_4_0_6"/>
<dbReference type="GO" id="GO:0000428">
    <property type="term" value="C:DNA-directed RNA polymerase complex"/>
    <property type="evidence" value="ECO:0007669"/>
    <property type="project" value="UniProtKB-KW"/>
</dbReference>
<dbReference type="GO" id="GO:0003677">
    <property type="term" value="F:DNA binding"/>
    <property type="evidence" value="ECO:0007669"/>
    <property type="project" value="UniProtKB-UniRule"/>
</dbReference>
<dbReference type="GO" id="GO:0003899">
    <property type="term" value="F:DNA-directed RNA polymerase activity"/>
    <property type="evidence" value="ECO:0007669"/>
    <property type="project" value="UniProtKB-UniRule"/>
</dbReference>
<dbReference type="GO" id="GO:0032549">
    <property type="term" value="F:ribonucleoside binding"/>
    <property type="evidence" value="ECO:0007669"/>
    <property type="project" value="InterPro"/>
</dbReference>
<dbReference type="GO" id="GO:0006351">
    <property type="term" value="P:DNA-templated transcription"/>
    <property type="evidence" value="ECO:0007669"/>
    <property type="project" value="UniProtKB-UniRule"/>
</dbReference>
<dbReference type="CDD" id="cd00653">
    <property type="entry name" value="RNA_pol_B_RPB2"/>
    <property type="match status" value="1"/>
</dbReference>
<dbReference type="FunFam" id="2.40.50.100:FF:000006">
    <property type="entry name" value="DNA-directed RNA polymerase subunit beta"/>
    <property type="match status" value="1"/>
</dbReference>
<dbReference type="FunFam" id="2.40.50.150:FF:000001">
    <property type="entry name" value="DNA-directed RNA polymerase subunit beta"/>
    <property type="match status" value="1"/>
</dbReference>
<dbReference type="FunFam" id="3.90.1800.10:FF:000001">
    <property type="entry name" value="DNA-directed RNA polymerase subunit beta"/>
    <property type="match status" value="1"/>
</dbReference>
<dbReference type="Gene3D" id="2.40.50.100">
    <property type="match status" value="1"/>
</dbReference>
<dbReference type="Gene3D" id="2.40.50.150">
    <property type="match status" value="1"/>
</dbReference>
<dbReference type="Gene3D" id="3.90.1100.10">
    <property type="match status" value="3"/>
</dbReference>
<dbReference type="Gene3D" id="2.40.270.10">
    <property type="entry name" value="DNA-directed RNA polymerase, subunit 2, domain 6"/>
    <property type="match status" value="1"/>
</dbReference>
<dbReference type="Gene3D" id="3.90.1800.10">
    <property type="entry name" value="RNA polymerase alpha subunit dimerisation domain"/>
    <property type="match status" value="1"/>
</dbReference>
<dbReference type="Gene3D" id="3.90.1110.10">
    <property type="entry name" value="RNA polymerase Rpb2, domain 2"/>
    <property type="match status" value="1"/>
</dbReference>
<dbReference type="HAMAP" id="MF_01321">
    <property type="entry name" value="RNApol_bact_RpoB"/>
    <property type="match status" value="1"/>
</dbReference>
<dbReference type="InterPro" id="IPR019462">
    <property type="entry name" value="DNA-dir_RNA_pol_bsu_external_1"/>
</dbReference>
<dbReference type="InterPro" id="IPR015712">
    <property type="entry name" value="DNA-dir_RNA_pol_su2"/>
</dbReference>
<dbReference type="InterPro" id="IPR007120">
    <property type="entry name" value="DNA-dir_RNAP_su2_dom"/>
</dbReference>
<dbReference type="InterPro" id="IPR037033">
    <property type="entry name" value="DNA-dir_RNAP_su2_hyb_sf"/>
</dbReference>
<dbReference type="InterPro" id="IPR010243">
    <property type="entry name" value="RNA_pol_bsu_bac"/>
</dbReference>
<dbReference type="InterPro" id="IPR007121">
    <property type="entry name" value="RNA_pol_bsu_CS"/>
</dbReference>
<dbReference type="InterPro" id="IPR007644">
    <property type="entry name" value="RNA_pol_bsu_protrusion"/>
</dbReference>
<dbReference type="InterPro" id="IPR007642">
    <property type="entry name" value="RNA_pol_Rpb2_2"/>
</dbReference>
<dbReference type="InterPro" id="IPR037034">
    <property type="entry name" value="RNA_pol_Rpb2_2_sf"/>
</dbReference>
<dbReference type="InterPro" id="IPR007645">
    <property type="entry name" value="RNA_pol_Rpb2_3"/>
</dbReference>
<dbReference type="InterPro" id="IPR007641">
    <property type="entry name" value="RNA_pol_Rpb2_7"/>
</dbReference>
<dbReference type="InterPro" id="IPR014724">
    <property type="entry name" value="RNA_pol_RPB2_OB-fold"/>
</dbReference>
<dbReference type="NCBIfam" id="NF001616">
    <property type="entry name" value="PRK00405.1"/>
    <property type="match status" value="1"/>
</dbReference>
<dbReference type="NCBIfam" id="TIGR02013">
    <property type="entry name" value="rpoB"/>
    <property type="match status" value="1"/>
</dbReference>
<dbReference type="PANTHER" id="PTHR20856">
    <property type="entry name" value="DNA-DIRECTED RNA POLYMERASE I SUBUNIT 2"/>
    <property type="match status" value="1"/>
</dbReference>
<dbReference type="Pfam" id="PF04563">
    <property type="entry name" value="RNA_pol_Rpb2_1"/>
    <property type="match status" value="1"/>
</dbReference>
<dbReference type="Pfam" id="PF04561">
    <property type="entry name" value="RNA_pol_Rpb2_2"/>
    <property type="match status" value="2"/>
</dbReference>
<dbReference type="Pfam" id="PF04565">
    <property type="entry name" value="RNA_pol_Rpb2_3"/>
    <property type="match status" value="1"/>
</dbReference>
<dbReference type="Pfam" id="PF10385">
    <property type="entry name" value="RNA_pol_Rpb2_45"/>
    <property type="match status" value="1"/>
</dbReference>
<dbReference type="Pfam" id="PF00562">
    <property type="entry name" value="RNA_pol_Rpb2_6"/>
    <property type="match status" value="1"/>
</dbReference>
<dbReference type="Pfam" id="PF04560">
    <property type="entry name" value="RNA_pol_Rpb2_7"/>
    <property type="match status" value="1"/>
</dbReference>
<dbReference type="SUPFAM" id="SSF64484">
    <property type="entry name" value="beta and beta-prime subunits of DNA dependent RNA-polymerase"/>
    <property type="match status" value="1"/>
</dbReference>
<dbReference type="PROSITE" id="PS01166">
    <property type="entry name" value="RNA_POL_BETA"/>
    <property type="match status" value="1"/>
</dbReference>
<feature type="chain" id="PRO_1000141753" description="DNA-directed RNA polymerase subunit beta">
    <location>
        <begin position="1"/>
        <end position="1384"/>
    </location>
</feature>
<evidence type="ECO:0000255" key="1">
    <source>
        <dbReference type="HAMAP-Rule" id="MF_01321"/>
    </source>
</evidence>
<reference key="1">
    <citation type="journal article" date="2010" name="J. Bacteriol.">
        <title>Whole genome sequences of two Xylella fastidiosa strains (M12 and M23) causing almond leaf scorch disease in California.</title>
        <authorList>
            <person name="Chen J."/>
            <person name="Xie G."/>
            <person name="Han S."/>
            <person name="Chertkov O."/>
            <person name="Sims D."/>
            <person name="Civerolo E.L."/>
        </authorList>
    </citation>
    <scope>NUCLEOTIDE SEQUENCE [LARGE SCALE GENOMIC DNA]</scope>
    <source>
        <strain>M12</strain>
    </source>
</reference>
<gene>
    <name evidence="1" type="primary">rpoB</name>
    <name type="ordered locus">Xfasm12_2196</name>
</gene>